<comment type="function">
    <text evidence="1">Involved in peptide bond synthesis. Stimulates efficient translation and peptide-bond synthesis on native or reconstituted 70S ribosomes in vitro. Probably functions indirectly by altering the affinity of the ribosome for aminoacyl-tRNA, thus increasing their reactivity as acceptors for peptidyl transferase (By similarity).</text>
</comment>
<comment type="pathway">
    <text>Protein biosynthesis; polypeptide chain elongation.</text>
</comment>
<comment type="subcellular location">
    <subcellularLocation>
        <location evidence="1">Cytoplasm</location>
    </subcellularLocation>
</comment>
<comment type="similarity">
    <text evidence="2">Belongs to the elongation factor P family.</text>
</comment>
<gene>
    <name type="primary">efp1</name>
    <name type="ordered locus">TC_0398</name>
</gene>
<dbReference type="EMBL" id="AE002160">
    <property type="protein sequence ID" value="AAF39255.1"/>
    <property type="molecule type" value="Genomic_DNA"/>
</dbReference>
<dbReference type="PIR" id="B81708">
    <property type="entry name" value="B81708"/>
</dbReference>
<dbReference type="RefSeq" id="WP_010230363.1">
    <property type="nucleotide sequence ID" value="NZ_CP063055.1"/>
</dbReference>
<dbReference type="SMR" id="Q9PKR6"/>
<dbReference type="GeneID" id="1245750"/>
<dbReference type="KEGG" id="cmu:TC_0398"/>
<dbReference type="eggNOG" id="COG0231">
    <property type="taxonomic scope" value="Bacteria"/>
</dbReference>
<dbReference type="HOGENOM" id="CLU_074944_0_1_0"/>
<dbReference type="OrthoDB" id="9801844at2"/>
<dbReference type="UniPathway" id="UPA00345"/>
<dbReference type="Proteomes" id="UP000000800">
    <property type="component" value="Chromosome"/>
</dbReference>
<dbReference type="GO" id="GO:0005737">
    <property type="term" value="C:cytoplasm"/>
    <property type="evidence" value="ECO:0007669"/>
    <property type="project" value="UniProtKB-SubCell"/>
</dbReference>
<dbReference type="GO" id="GO:0003746">
    <property type="term" value="F:translation elongation factor activity"/>
    <property type="evidence" value="ECO:0007669"/>
    <property type="project" value="UniProtKB-UniRule"/>
</dbReference>
<dbReference type="GO" id="GO:0043043">
    <property type="term" value="P:peptide biosynthetic process"/>
    <property type="evidence" value="ECO:0007669"/>
    <property type="project" value="InterPro"/>
</dbReference>
<dbReference type="CDD" id="cd05794">
    <property type="entry name" value="S1_EF-P_repeat_2"/>
    <property type="match status" value="1"/>
</dbReference>
<dbReference type="FunFam" id="2.40.50.140:FF:000004">
    <property type="entry name" value="Elongation factor P"/>
    <property type="match status" value="1"/>
</dbReference>
<dbReference type="Gene3D" id="2.30.30.30">
    <property type="match status" value="1"/>
</dbReference>
<dbReference type="Gene3D" id="2.40.50.140">
    <property type="entry name" value="Nucleic acid-binding proteins"/>
    <property type="match status" value="2"/>
</dbReference>
<dbReference type="HAMAP" id="MF_00141">
    <property type="entry name" value="EF_P"/>
    <property type="match status" value="1"/>
</dbReference>
<dbReference type="InterPro" id="IPR015365">
    <property type="entry name" value="Elong-fact-P_C"/>
</dbReference>
<dbReference type="InterPro" id="IPR012340">
    <property type="entry name" value="NA-bd_OB-fold"/>
</dbReference>
<dbReference type="InterPro" id="IPR014722">
    <property type="entry name" value="Rib_uL2_dom2"/>
</dbReference>
<dbReference type="InterPro" id="IPR020599">
    <property type="entry name" value="Transl_elong_fac_P/YeiP"/>
</dbReference>
<dbReference type="InterPro" id="IPR013185">
    <property type="entry name" value="Transl_elong_KOW-like"/>
</dbReference>
<dbReference type="InterPro" id="IPR001059">
    <property type="entry name" value="Transl_elong_P/YeiP_cen"/>
</dbReference>
<dbReference type="InterPro" id="IPR013852">
    <property type="entry name" value="Transl_elong_P/YeiP_CS"/>
</dbReference>
<dbReference type="InterPro" id="IPR011768">
    <property type="entry name" value="Transl_elongation_fac_P"/>
</dbReference>
<dbReference type="InterPro" id="IPR008991">
    <property type="entry name" value="Translation_prot_SH3-like_sf"/>
</dbReference>
<dbReference type="NCBIfam" id="NF009090">
    <property type="entry name" value="PRK12426.1"/>
    <property type="match status" value="1"/>
</dbReference>
<dbReference type="PANTHER" id="PTHR30053">
    <property type="entry name" value="ELONGATION FACTOR P"/>
    <property type="match status" value="1"/>
</dbReference>
<dbReference type="PANTHER" id="PTHR30053:SF12">
    <property type="entry name" value="ELONGATION FACTOR P (EF-P) FAMILY PROTEIN"/>
    <property type="match status" value="1"/>
</dbReference>
<dbReference type="Pfam" id="PF01132">
    <property type="entry name" value="EFP"/>
    <property type="match status" value="1"/>
</dbReference>
<dbReference type="Pfam" id="PF08207">
    <property type="entry name" value="EFP_N"/>
    <property type="match status" value="1"/>
</dbReference>
<dbReference type="Pfam" id="PF09285">
    <property type="entry name" value="Elong-fact-P_C"/>
    <property type="match status" value="1"/>
</dbReference>
<dbReference type="PIRSF" id="PIRSF005901">
    <property type="entry name" value="EF-P"/>
    <property type="match status" value="1"/>
</dbReference>
<dbReference type="SMART" id="SM01185">
    <property type="entry name" value="EFP"/>
    <property type="match status" value="1"/>
</dbReference>
<dbReference type="SMART" id="SM00841">
    <property type="entry name" value="Elong-fact-P_C"/>
    <property type="match status" value="1"/>
</dbReference>
<dbReference type="SUPFAM" id="SSF50249">
    <property type="entry name" value="Nucleic acid-binding proteins"/>
    <property type="match status" value="2"/>
</dbReference>
<dbReference type="SUPFAM" id="SSF50104">
    <property type="entry name" value="Translation proteins SH3-like domain"/>
    <property type="match status" value="1"/>
</dbReference>
<dbReference type="PROSITE" id="PS01275">
    <property type="entry name" value="EFP"/>
    <property type="match status" value="1"/>
</dbReference>
<name>EFP1_CHLMU</name>
<organism>
    <name type="scientific">Chlamydia muridarum (strain MoPn / Nigg)</name>
    <dbReference type="NCBI Taxonomy" id="243161"/>
    <lineage>
        <taxon>Bacteria</taxon>
        <taxon>Pseudomonadati</taxon>
        <taxon>Chlamydiota</taxon>
        <taxon>Chlamydiia</taxon>
        <taxon>Chlamydiales</taxon>
        <taxon>Chlamydiaceae</taxon>
        <taxon>Chlamydia/Chlamydophila group</taxon>
        <taxon>Chlamydia</taxon>
    </lineage>
</organism>
<accession>Q9PKR6</accession>
<sequence length="185" mass="20468">MVLSSQLSVGMFISTKDGLYKVVSVSKVSGSKGDTFIKVALQAAGSDVVVERNFKAGQEVKEAQFEPRNLEYLYLEEDNYLFLDLGNYEKIYIPKEIMKENAMFLKAGVTISALVHEGIVFSMELPHFLELMVSKTDFPGDSLSLSGGAKKALLETGVEVLVPPFVEIGDVIKVDTRTCEYIQRV</sequence>
<reference key="1">
    <citation type="journal article" date="2000" name="Nucleic Acids Res.">
        <title>Genome sequences of Chlamydia trachomatis MoPn and Chlamydia pneumoniae AR39.</title>
        <authorList>
            <person name="Read T.D."/>
            <person name="Brunham R.C."/>
            <person name="Shen C."/>
            <person name="Gill S.R."/>
            <person name="Heidelberg J.F."/>
            <person name="White O."/>
            <person name="Hickey E.K."/>
            <person name="Peterson J.D."/>
            <person name="Utterback T.R."/>
            <person name="Berry K.J."/>
            <person name="Bass S."/>
            <person name="Linher K.D."/>
            <person name="Weidman J.F."/>
            <person name="Khouri H.M."/>
            <person name="Craven B."/>
            <person name="Bowman C."/>
            <person name="Dodson R.J."/>
            <person name="Gwinn M.L."/>
            <person name="Nelson W.C."/>
            <person name="DeBoy R.T."/>
            <person name="Kolonay J.F."/>
            <person name="McClarty G."/>
            <person name="Salzberg S.L."/>
            <person name="Eisen J.A."/>
            <person name="Fraser C.M."/>
        </authorList>
    </citation>
    <scope>NUCLEOTIDE SEQUENCE [LARGE SCALE GENOMIC DNA]</scope>
    <source>
        <strain>MoPn / Nigg</strain>
    </source>
</reference>
<keyword id="KW-0963">Cytoplasm</keyword>
<keyword id="KW-0251">Elongation factor</keyword>
<keyword id="KW-0648">Protein biosynthesis</keyword>
<feature type="chain" id="PRO_0000094227" description="Elongation factor P 1">
    <location>
        <begin position="1"/>
        <end position="185"/>
    </location>
</feature>
<evidence type="ECO:0000250" key="1"/>
<evidence type="ECO:0000305" key="2"/>
<proteinExistence type="inferred from homology"/>
<protein>
    <recommendedName>
        <fullName>Elongation factor P 1</fullName>
        <shortName>EF-P 1</shortName>
    </recommendedName>
</protein>